<keyword id="KW-0106">Calcium</keyword>
<keyword id="KW-0177">Collagen degradation</keyword>
<keyword id="KW-1015">Disulfide bond</keyword>
<keyword id="KW-0272">Extracellular matrix</keyword>
<keyword id="KW-0378">Hydrolase</keyword>
<keyword id="KW-0479">Metal-binding</keyword>
<keyword id="KW-0482">Metalloprotease</keyword>
<keyword id="KW-0597">Phosphoprotein</keyword>
<keyword id="KW-0645">Protease</keyword>
<keyword id="KW-1185">Reference proteome</keyword>
<keyword id="KW-0677">Repeat</keyword>
<keyword id="KW-0964">Secreted</keyword>
<keyword id="KW-0732">Signal</keyword>
<keyword id="KW-0862">Zinc</keyword>
<keyword id="KW-0865">Zymogen</keyword>
<accession>Q9XSZ5</accession>
<gene>
    <name type="primary">MMP1</name>
</gene>
<proteinExistence type="evidence at transcript level"/>
<dbReference type="EC" id="3.4.24.7"/>
<dbReference type="EMBL" id="AF148882">
    <property type="protein sequence ID" value="AAD38030.1"/>
    <property type="molecule type" value="mRNA"/>
</dbReference>
<dbReference type="RefSeq" id="NP_001075316.1">
    <property type="nucleotide sequence ID" value="NM_001081847.2"/>
</dbReference>
<dbReference type="SMR" id="Q9XSZ5"/>
<dbReference type="FunCoup" id="Q9XSZ5">
    <property type="interactions" value="143"/>
</dbReference>
<dbReference type="MEROPS" id="M10.001"/>
<dbReference type="GeneID" id="100033896"/>
<dbReference type="KEGG" id="ecb:100033896"/>
<dbReference type="CTD" id="4312"/>
<dbReference type="InParanoid" id="Q9XSZ5"/>
<dbReference type="OrthoDB" id="406838at2759"/>
<dbReference type="Proteomes" id="UP000002281">
    <property type="component" value="Unplaced"/>
</dbReference>
<dbReference type="GO" id="GO:0031012">
    <property type="term" value="C:extracellular matrix"/>
    <property type="evidence" value="ECO:0007669"/>
    <property type="project" value="InterPro"/>
</dbReference>
<dbReference type="GO" id="GO:0005576">
    <property type="term" value="C:extracellular region"/>
    <property type="evidence" value="ECO:0007669"/>
    <property type="project" value="UniProtKB-KW"/>
</dbReference>
<dbReference type="GO" id="GO:0004222">
    <property type="term" value="F:metalloendopeptidase activity"/>
    <property type="evidence" value="ECO:0000318"/>
    <property type="project" value="GO_Central"/>
</dbReference>
<dbReference type="GO" id="GO:0008233">
    <property type="term" value="F:peptidase activity"/>
    <property type="evidence" value="ECO:0000250"/>
    <property type="project" value="UniProtKB"/>
</dbReference>
<dbReference type="GO" id="GO:0008270">
    <property type="term" value="F:zinc ion binding"/>
    <property type="evidence" value="ECO:0007669"/>
    <property type="project" value="InterPro"/>
</dbReference>
<dbReference type="GO" id="GO:0071492">
    <property type="term" value="P:cellular response to UV-A"/>
    <property type="evidence" value="ECO:0000250"/>
    <property type="project" value="UniProtKB"/>
</dbReference>
<dbReference type="GO" id="GO:0030574">
    <property type="term" value="P:collagen catabolic process"/>
    <property type="evidence" value="ECO:0000318"/>
    <property type="project" value="GO_Central"/>
</dbReference>
<dbReference type="GO" id="GO:0030198">
    <property type="term" value="P:extracellular matrix organization"/>
    <property type="evidence" value="ECO:0000318"/>
    <property type="project" value="GO_Central"/>
</dbReference>
<dbReference type="GO" id="GO:0006508">
    <property type="term" value="P:proteolysis"/>
    <property type="evidence" value="ECO:0007669"/>
    <property type="project" value="UniProtKB-KW"/>
</dbReference>
<dbReference type="CDD" id="cd00094">
    <property type="entry name" value="HX"/>
    <property type="match status" value="1"/>
</dbReference>
<dbReference type="CDD" id="cd04278">
    <property type="entry name" value="ZnMc_MMP"/>
    <property type="match status" value="1"/>
</dbReference>
<dbReference type="FunFam" id="3.40.390.10:FF:000007">
    <property type="entry name" value="Collagenase 3"/>
    <property type="match status" value="1"/>
</dbReference>
<dbReference type="FunFam" id="2.110.10.10:FF:000002">
    <property type="entry name" value="Matrix metallopeptidase 3"/>
    <property type="match status" value="1"/>
</dbReference>
<dbReference type="Gene3D" id="3.40.390.10">
    <property type="entry name" value="Collagenase (Catalytic Domain)"/>
    <property type="match status" value="1"/>
</dbReference>
<dbReference type="Gene3D" id="2.110.10.10">
    <property type="entry name" value="Hemopexin-like domain"/>
    <property type="match status" value="1"/>
</dbReference>
<dbReference type="InterPro" id="IPR000585">
    <property type="entry name" value="Hemopexin-like_dom"/>
</dbReference>
<dbReference type="InterPro" id="IPR036375">
    <property type="entry name" value="Hemopexin-like_dom_sf"/>
</dbReference>
<dbReference type="InterPro" id="IPR018487">
    <property type="entry name" value="Hemopexin-like_repeat"/>
</dbReference>
<dbReference type="InterPro" id="IPR018486">
    <property type="entry name" value="Hemopexin_CS"/>
</dbReference>
<dbReference type="InterPro" id="IPR033739">
    <property type="entry name" value="M10A_MMP"/>
</dbReference>
<dbReference type="InterPro" id="IPR024079">
    <property type="entry name" value="MetalloPept_cat_dom_sf"/>
</dbReference>
<dbReference type="InterPro" id="IPR001818">
    <property type="entry name" value="Pept_M10_metallopeptidase"/>
</dbReference>
<dbReference type="InterPro" id="IPR021190">
    <property type="entry name" value="Pept_M10A"/>
</dbReference>
<dbReference type="InterPro" id="IPR021158">
    <property type="entry name" value="Pept_M10A_Zn_BS"/>
</dbReference>
<dbReference type="InterPro" id="IPR006026">
    <property type="entry name" value="Peptidase_Metallo"/>
</dbReference>
<dbReference type="InterPro" id="IPR002477">
    <property type="entry name" value="Peptidoglycan-bd-like"/>
</dbReference>
<dbReference type="InterPro" id="IPR036365">
    <property type="entry name" value="PGBD-like_sf"/>
</dbReference>
<dbReference type="PANTHER" id="PTHR10201:SF151">
    <property type="entry name" value="INTERSTITIAL COLLAGENASE"/>
    <property type="match status" value="1"/>
</dbReference>
<dbReference type="PANTHER" id="PTHR10201">
    <property type="entry name" value="MATRIX METALLOPROTEINASE"/>
    <property type="match status" value="1"/>
</dbReference>
<dbReference type="Pfam" id="PF00045">
    <property type="entry name" value="Hemopexin"/>
    <property type="match status" value="4"/>
</dbReference>
<dbReference type="Pfam" id="PF00413">
    <property type="entry name" value="Peptidase_M10"/>
    <property type="match status" value="1"/>
</dbReference>
<dbReference type="Pfam" id="PF01471">
    <property type="entry name" value="PG_binding_1"/>
    <property type="match status" value="1"/>
</dbReference>
<dbReference type="PIRSF" id="PIRSF001191">
    <property type="entry name" value="Peptidase_M10A_matrix"/>
    <property type="match status" value="1"/>
</dbReference>
<dbReference type="PRINTS" id="PR00138">
    <property type="entry name" value="MATRIXIN"/>
</dbReference>
<dbReference type="SMART" id="SM00120">
    <property type="entry name" value="HX"/>
    <property type="match status" value="4"/>
</dbReference>
<dbReference type="SMART" id="SM00235">
    <property type="entry name" value="ZnMc"/>
    <property type="match status" value="1"/>
</dbReference>
<dbReference type="SUPFAM" id="SSF50923">
    <property type="entry name" value="Hemopexin-like domain"/>
    <property type="match status" value="1"/>
</dbReference>
<dbReference type="SUPFAM" id="SSF55486">
    <property type="entry name" value="Metalloproteases ('zincins'), catalytic domain"/>
    <property type="match status" value="1"/>
</dbReference>
<dbReference type="SUPFAM" id="SSF47090">
    <property type="entry name" value="PGBD-like"/>
    <property type="match status" value="1"/>
</dbReference>
<dbReference type="PROSITE" id="PS00546">
    <property type="entry name" value="CYSTEINE_SWITCH"/>
    <property type="match status" value="1"/>
</dbReference>
<dbReference type="PROSITE" id="PS00024">
    <property type="entry name" value="HEMOPEXIN"/>
    <property type="match status" value="1"/>
</dbReference>
<dbReference type="PROSITE" id="PS51642">
    <property type="entry name" value="HEMOPEXIN_2"/>
    <property type="match status" value="4"/>
</dbReference>
<dbReference type="PROSITE" id="PS00142">
    <property type="entry name" value="ZINC_PROTEASE"/>
    <property type="match status" value="1"/>
</dbReference>
<protein>
    <recommendedName>
        <fullName>Interstitial collagenase</fullName>
        <ecNumber>3.4.24.7</ecNumber>
    </recommendedName>
    <alternativeName>
        <fullName>Matrix metalloproteinase-1</fullName>
        <shortName>MMP-1</shortName>
    </alternativeName>
</protein>
<sequence>MLSLPLLLLLLWGMGSHSFPTVPSETREEDVEMVQKYLENYYNLKSDGEQIEKQRHRSPVVEKLKQMQEFFGLKVTGKPDAETLNVMKQPRCGVPDVAEFVLTEGNPRWENTHLTYRIENYTPDLPRADVDQAIEKAFQLWSNVSPLTFTKVSEGQADIMISFVRGDHRDNSPFDGPGGNLAHAFQPGPRIGGDAHFDEDETWTSNFRNYNLYRVAAHEFGHSLGLSHSTDIGALMYPNYFFTGDVQLSQDDINGIQAIYGPSQNPIQPIGPQTPEVCDSKLTFDAITTIRGEVMFFKDRFYMRINPYYPEAELNFISIFWPQLPNGLQAAYEVSHRDEVRFFKGNKYWAVKGQDVLYGYPKDIHRSFGFPSTVKNIDAAVSEEDTGKTYFFVADKYWRYDEYKRSMDAGYPKMIADDFPGIGDKVDAVFQKDGFFYFFHGTRQYKFDPKTKRILTLQKANSWFNCRKN</sequence>
<evidence type="ECO:0000250" key="1"/>
<evidence type="ECO:0000250" key="2">
    <source>
        <dbReference type="UniProtKB" id="P03956"/>
    </source>
</evidence>
<evidence type="ECO:0000255" key="3">
    <source>
        <dbReference type="PROSITE-ProRule" id="PRU10095"/>
    </source>
</evidence>
<evidence type="ECO:0000305" key="4"/>
<reference key="1">
    <citation type="submission" date="1999-05" db="EMBL/GenBank/DDBJ databases">
        <title>Cloning and expression of equine matrix metalloproteinase 1 (interstitial collagenase).</title>
        <authorList>
            <person name="Richardson D.W."/>
        </authorList>
    </citation>
    <scope>NUCLEOTIDE SEQUENCE [MRNA]</scope>
</reference>
<name>MMP1_HORSE</name>
<organism>
    <name type="scientific">Equus caballus</name>
    <name type="common">Horse</name>
    <dbReference type="NCBI Taxonomy" id="9796"/>
    <lineage>
        <taxon>Eukaryota</taxon>
        <taxon>Metazoa</taxon>
        <taxon>Chordata</taxon>
        <taxon>Craniata</taxon>
        <taxon>Vertebrata</taxon>
        <taxon>Euteleostomi</taxon>
        <taxon>Mammalia</taxon>
        <taxon>Eutheria</taxon>
        <taxon>Laurasiatheria</taxon>
        <taxon>Perissodactyla</taxon>
        <taxon>Equidae</taxon>
        <taxon>Equus</taxon>
    </lineage>
</organism>
<feature type="signal peptide" evidence="1">
    <location>
        <begin position="1"/>
        <end position="18"/>
    </location>
</feature>
<feature type="propeptide" id="PRO_0000028701" description="Activation peptide">
    <location>
        <begin position="19"/>
        <end position="99"/>
    </location>
</feature>
<feature type="chain" id="PRO_0000028702" description="Interstitial collagenase">
    <location>
        <begin position="100"/>
        <end position="469"/>
    </location>
</feature>
<feature type="repeat" description="Hemopexin 1">
    <location>
        <begin position="275"/>
        <end position="324"/>
    </location>
</feature>
<feature type="repeat" description="Hemopexin 2">
    <location>
        <begin position="325"/>
        <end position="371"/>
    </location>
</feature>
<feature type="repeat" description="Hemopexin 3">
    <location>
        <begin position="374"/>
        <end position="422"/>
    </location>
</feature>
<feature type="repeat" description="Hemopexin 4">
    <location>
        <begin position="423"/>
        <end position="466"/>
    </location>
</feature>
<feature type="short sequence motif" description="Cysteine switch" evidence="1">
    <location>
        <begin position="90"/>
        <end position="97"/>
    </location>
</feature>
<feature type="active site" evidence="3">
    <location>
        <position position="219"/>
    </location>
</feature>
<feature type="binding site" description="in inhibited form" evidence="1">
    <location>
        <position position="92"/>
    </location>
    <ligand>
        <name>Zn(2+)</name>
        <dbReference type="ChEBI" id="CHEBI:29105"/>
        <label>2</label>
        <note>catalytic</note>
    </ligand>
</feature>
<feature type="binding site" evidence="1">
    <location>
        <position position="124"/>
    </location>
    <ligand>
        <name>Ca(2+)</name>
        <dbReference type="ChEBI" id="CHEBI:29108"/>
        <label>1</label>
    </ligand>
</feature>
<feature type="binding site" evidence="1">
    <location>
        <position position="158"/>
    </location>
    <ligand>
        <name>Ca(2+)</name>
        <dbReference type="ChEBI" id="CHEBI:29108"/>
        <label>2</label>
    </ligand>
</feature>
<feature type="binding site" evidence="1">
    <location>
        <position position="168"/>
    </location>
    <ligand>
        <name>Zn(2+)</name>
        <dbReference type="ChEBI" id="CHEBI:29105"/>
        <label>1</label>
    </ligand>
</feature>
<feature type="binding site" evidence="1">
    <location>
        <position position="170"/>
    </location>
    <ligand>
        <name>Zn(2+)</name>
        <dbReference type="ChEBI" id="CHEBI:29105"/>
        <label>1</label>
    </ligand>
</feature>
<feature type="binding site" evidence="1">
    <location>
        <position position="175"/>
    </location>
    <ligand>
        <name>Ca(2+)</name>
        <dbReference type="ChEBI" id="CHEBI:29108"/>
        <label>3</label>
    </ligand>
</feature>
<feature type="binding site" evidence="1">
    <location>
        <position position="176"/>
    </location>
    <ligand>
        <name>Ca(2+)</name>
        <dbReference type="ChEBI" id="CHEBI:29108"/>
        <label>3</label>
    </ligand>
</feature>
<feature type="binding site" evidence="1">
    <location>
        <position position="178"/>
    </location>
    <ligand>
        <name>Ca(2+)</name>
        <dbReference type="ChEBI" id="CHEBI:29108"/>
        <label>3</label>
    </ligand>
</feature>
<feature type="binding site" evidence="1">
    <location>
        <position position="180"/>
    </location>
    <ligand>
        <name>Ca(2+)</name>
        <dbReference type="ChEBI" id="CHEBI:29108"/>
        <label>3</label>
    </ligand>
</feature>
<feature type="binding site" evidence="1">
    <location>
        <position position="183"/>
    </location>
    <ligand>
        <name>Zn(2+)</name>
        <dbReference type="ChEBI" id="CHEBI:29105"/>
        <label>1</label>
    </ligand>
</feature>
<feature type="binding site" evidence="1">
    <location>
        <position position="190"/>
    </location>
    <ligand>
        <name>Ca(2+)</name>
        <dbReference type="ChEBI" id="CHEBI:29108"/>
        <label>2</label>
    </ligand>
</feature>
<feature type="binding site" evidence="1">
    <location>
        <position position="192"/>
    </location>
    <ligand>
        <name>Ca(2+)</name>
        <dbReference type="ChEBI" id="CHEBI:29108"/>
        <label>2</label>
    </ligand>
</feature>
<feature type="binding site" evidence="1">
    <location>
        <position position="194"/>
    </location>
    <ligand>
        <name>Ca(2+)</name>
        <dbReference type="ChEBI" id="CHEBI:29108"/>
        <label>2</label>
    </ligand>
</feature>
<feature type="binding site" evidence="1">
    <location>
        <position position="196"/>
    </location>
    <ligand>
        <name>Zn(2+)</name>
        <dbReference type="ChEBI" id="CHEBI:29105"/>
        <label>1</label>
    </ligand>
</feature>
<feature type="binding site" evidence="1">
    <location>
        <position position="198"/>
    </location>
    <ligand>
        <name>Ca(2+)</name>
        <dbReference type="ChEBI" id="CHEBI:29108"/>
        <label>3</label>
    </ligand>
</feature>
<feature type="binding site" evidence="1">
    <location>
        <position position="199"/>
    </location>
    <ligand>
        <name>Ca(2+)</name>
        <dbReference type="ChEBI" id="CHEBI:29108"/>
        <label>1</label>
    </ligand>
</feature>
<feature type="binding site" evidence="1">
    <location>
        <position position="201"/>
    </location>
    <ligand>
        <name>Ca(2+)</name>
        <dbReference type="ChEBI" id="CHEBI:29108"/>
        <label>3</label>
    </ligand>
</feature>
<feature type="binding site" evidence="1">
    <location>
        <position position="218"/>
    </location>
    <ligand>
        <name>Zn(2+)</name>
        <dbReference type="ChEBI" id="CHEBI:29105"/>
        <label>2</label>
        <note>catalytic</note>
    </ligand>
</feature>
<feature type="binding site" evidence="1">
    <location>
        <position position="222"/>
    </location>
    <ligand>
        <name>Zn(2+)</name>
        <dbReference type="ChEBI" id="CHEBI:29105"/>
        <label>2</label>
        <note>catalytic</note>
    </ligand>
</feature>
<feature type="binding site" evidence="1">
    <location>
        <position position="228"/>
    </location>
    <ligand>
        <name>Zn(2+)</name>
        <dbReference type="ChEBI" id="CHEBI:29105"/>
        <label>2</label>
        <note>catalytic</note>
    </ligand>
</feature>
<feature type="binding site" evidence="1">
    <location>
        <position position="285"/>
    </location>
    <ligand>
        <name>Ca(2+)</name>
        <dbReference type="ChEBI" id="CHEBI:29108"/>
        <label>4</label>
    </ligand>
</feature>
<feature type="binding site" evidence="1">
    <location>
        <position position="329"/>
    </location>
    <ligand>
        <name>Ca(2+)</name>
        <dbReference type="ChEBI" id="CHEBI:29108"/>
        <label>4</label>
    </ligand>
</feature>
<feature type="binding site" evidence="1">
    <location>
        <position position="378"/>
    </location>
    <ligand>
        <name>Ca(2+)</name>
        <dbReference type="ChEBI" id="CHEBI:29108"/>
        <label>4</label>
    </ligand>
</feature>
<feature type="binding site" evidence="1">
    <location>
        <position position="427"/>
    </location>
    <ligand>
        <name>Ca(2+)</name>
        <dbReference type="ChEBI" id="CHEBI:29108"/>
        <label>4</label>
    </ligand>
</feature>
<feature type="modified residue" description="Phosphothreonine" evidence="2">
    <location>
        <position position="274"/>
    </location>
</feature>
<feature type="modified residue" description="Phosphotyrosine; by PKDCC" evidence="2">
    <location>
        <position position="360"/>
    </location>
</feature>
<feature type="disulfide bond" evidence="1">
    <location>
        <begin position="278"/>
        <end position="466"/>
    </location>
</feature>
<comment type="function">
    <text>Cleaves collagens of types I, II, and III at one site in the helical domain. Also cleaves collagens of types VII and X.</text>
</comment>
<comment type="catalytic activity">
    <reaction>
        <text>Cleavage of the triple helix of collagen at about three-quarters of the length of the molecule from the N-terminus, at 775-Gly-|-Ile-776 in the alpha1(I) chain. Cleaves synthetic substrates and alpha-macroglobulins at bonds where P1' is a hydrophobic residue.</text>
        <dbReference type="EC" id="3.4.24.7"/>
    </reaction>
</comment>
<comment type="cofactor">
    <cofactor evidence="1">
        <name>Ca(2+)</name>
        <dbReference type="ChEBI" id="CHEBI:29108"/>
    </cofactor>
    <text evidence="1">Binds 4 Ca(2+) ions per subunit.</text>
</comment>
<comment type="cofactor">
    <cofactor evidence="1">
        <name>Zn(2+)</name>
        <dbReference type="ChEBI" id="CHEBI:29105"/>
    </cofactor>
    <text evidence="1">Binds 2 Zn(2+) ions per subunit.</text>
</comment>
<comment type="activity regulation">
    <text>Can be activated without removal of the activation peptide.</text>
</comment>
<comment type="subcellular location">
    <subcellularLocation>
        <location evidence="1">Secreted</location>
        <location evidence="1">Extracellular space</location>
        <location evidence="1">Extracellular matrix</location>
    </subcellularLocation>
</comment>
<comment type="domain">
    <text>The conserved cysteine present in the cysteine-switch motif binds the catalytic zinc ion, thus inhibiting the enzyme. The dissociation of the cysteine from the zinc ion upon the activation-peptide release activates the enzyme.</text>
</comment>
<comment type="PTM">
    <text evidence="2">Tyrosine phosphorylated in platelets by PKDCC/VLK.</text>
</comment>
<comment type="similarity">
    <text evidence="4">Belongs to the peptidase M10A family.</text>
</comment>